<name>YPV8_METTF</name>
<feature type="chain" id="PRO_0000066432" description="Uncharacterized protein ORF8">
    <location>
        <begin position="1"/>
        <end position="361"/>
    </location>
</feature>
<sequence>MPVNPPPTTPTDNLNFNKTVEFKFPQELGKPPLRKGVAPKLLLGHLVVLPIYLSGGTPMGGHDGIQEDLLIVPQLLDTTPDKLNLNLISRHPDVRLTYNTLKLPYRNIRRKAEEVKGIPGVPVTLGRERRTQWHNVVFQDTVVKRHLNPVVQDLLKLRGAVRGETDSPWLKRGYDPRVADHIHYGQLVGKTHNAHIRLPRKVVEEFIPVPGKSLIDLVHDNYHLALRGPFPNLLHNVQEPKTASGGPGNGRCDLVGSAVRNDILNYRVTGVLLEFVDHILRRDSLPRSWGPYNQQVGWGGAVEDVPQVLADSTHLFLSVLQGVRHKERAEDIPVFEKSRSLLKHLQLPAIQLYNSKPHFYM</sequence>
<protein>
    <recommendedName>
        <fullName>Uncharacterized protein ORF8</fullName>
    </recommendedName>
</protein>
<dbReference type="EMBL" id="X68366">
    <property type="protein sequence ID" value="CAA48425.1"/>
    <property type="molecule type" value="Genomic_DNA"/>
</dbReference>
<dbReference type="PIR" id="S30313">
    <property type="entry name" value="S30313"/>
</dbReference>
<dbReference type="RefSeq" id="NP_039753.1">
    <property type="nucleotide sequence ID" value="NC_001336.1"/>
</dbReference>
<accession>P29584</accession>
<organism>
    <name type="scientific">Methanothermobacter thermautotrophicus</name>
    <name type="common">Methanobacterium thermoformicicum</name>
    <dbReference type="NCBI Taxonomy" id="145262"/>
    <lineage>
        <taxon>Archaea</taxon>
        <taxon>Methanobacteriati</taxon>
        <taxon>Methanobacteriota</taxon>
        <taxon>Methanomada group</taxon>
        <taxon>Methanobacteria</taxon>
        <taxon>Methanobacteriales</taxon>
        <taxon>Methanobacteriaceae</taxon>
        <taxon>Methanothermobacter</taxon>
    </lineage>
</organism>
<reference key="1">
    <citation type="journal article" date="1992" name="Nucleic Acids Res.">
        <title>Modular organization of related Archaeal plasmids encoding different restriction-modification systems in Methanobacterium thermoformicicum.</title>
        <authorList>
            <person name="Noelling J."/>
            <person name="van Eeden F.J.M."/>
            <person name="Eggen R.I.L."/>
            <person name="de Vos W.M."/>
        </authorList>
    </citation>
    <scope>NUCLEOTIDE SEQUENCE [GENOMIC DNA]</scope>
    <source>
        <strain>DSM 3848 / THF</strain>
    </source>
</reference>
<keyword id="KW-0614">Plasmid</keyword>
<geneLocation type="plasmid">
    <name>pFV1</name>
</geneLocation>
<proteinExistence type="predicted"/>